<gene>
    <name type="primary">dcl1</name>
    <name type="ORF">ACLA_014840</name>
</gene>
<evidence type="ECO:0000250" key="1"/>
<evidence type="ECO:0000250" key="2">
    <source>
        <dbReference type="UniProtKB" id="Q09884"/>
    </source>
</evidence>
<evidence type="ECO:0000255" key="3">
    <source>
        <dbReference type="PROSITE-ProRule" id="PRU00142"/>
    </source>
</evidence>
<evidence type="ECO:0000255" key="4">
    <source>
        <dbReference type="PROSITE-ProRule" id="PRU00177"/>
    </source>
</evidence>
<evidence type="ECO:0000255" key="5">
    <source>
        <dbReference type="PROSITE-ProRule" id="PRU00541"/>
    </source>
</evidence>
<evidence type="ECO:0000255" key="6">
    <source>
        <dbReference type="PROSITE-ProRule" id="PRU00542"/>
    </source>
</evidence>
<evidence type="ECO:0000255" key="7">
    <source>
        <dbReference type="PROSITE-ProRule" id="PRU00657"/>
    </source>
</evidence>
<evidence type="ECO:0000256" key="8">
    <source>
        <dbReference type="SAM" id="MobiDB-lite"/>
    </source>
</evidence>
<evidence type="ECO:0000305" key="9"/>
<keyword id="KW-0051">Antiviral defense</keyword>
<keyword id="KW-0930">Antiviral protein</keyword>
<keyword id="KW-0067">ATP-binding</keyword>
<keyword id="KW-0347">Helicase</keyword>
<keyword id="KW-0378">Hydrolase</keyword>
<keyword id="KW-0460">Magnesium</keyword>
<keyword id="KW-0464">Manganese</keyword>
<keyword id="KW-0479">Metal-binding</keyword>
<keyword id="KW-0547">Nucleotide-binding</keyword>
<keyword id="KW-1185">Reference proteome</keyword>
<keyword id="KW-0677">Repeat</keyword>
<keyword id="KW-0694">RNA-binding</keyword>
<keyword id="KW-0862">Zinc</keyword>
<name>DCL1_ASPCL</name>
<accession>A1CBC9</accession>
<protein>
    <recommendedName>
        <fullName>Dicer-like protein 1</fullName>
    </recommendedName>
    <domain>
        <recommendedName>
            <fullName>Endoribonuclease dcl1</fullName>
            <ecNumber>3.1.26.-</ecNumber>
        </recommendedName>
    </domain>
    <domain>
        <recommendedName>
            <fullName>ATP-dependent helicase dcl1</fullName>
            <ecNumber>3.6.4.-</ecNumber>
        </recommendedName>
    </domain>
</protein>
<organism>
    <name type="scientific">Aspergillus clavatus (strain ATCC 1007 / CBS 513.65 / DSM 816 / NCTC 3887 / NRRL 1 / QM 1276 / 107)</name>
    <dbReference type="NCBI Taxonomy" id="344612"/>
    <lineage>
        <taxon>Eukaryota</taxon>
        <taxon>Fungi</taxon>
        <taxon>Dikarya</taxon>
        <taxon>Ascomycota</taxon>
        <taxon>Pezizomycotina</taxon>
        <taxon>Eurotiomycetes</taxon>
        <taxon>Eurotiomycetidae</taxon>
        <taxon>Eurotiales</taxon>
        <taxon>Aspergillaceae</taxon>
        <taxon>Aspergillus</taxon>
        <taxon>Aspergillus subgen. Fumigati</taxon>
    </lineage>
</organism>
<proteinExistence type="inferred from homology"/>
<feature type="chain" id="PRO_0000306773" description="Dicer-like protein 1">
    <location>
        <begin position="1"/>
        <end position="1534"/>
    </location>
</feature>
<feature type="domain" description="Helicase ATP-binding" evidence="5">
    <location>
        <begin position="130"/>
        <end position="311"/>
    </location>
</feature>
<feature type="domain" description="Helicase C-terminal" evidence="6">
    <location>
        <begin position="456"/>
        <end position="613"/>
    </location>
</feature>
<feature type="domain" description="Dicer dsRNA-binding fold" evidence="7">
    <location>
        <begin position="648"/>
        <end position="738"/>
    </location>
</feature>
<feature type="domain" description="PAZ" evidence="3">
    <location>
        <begin position="888"/>
        <end position="1016"/>
    </location>
</feature>
<feature type="domain" description="RNase III 1" evidence="4">
    <location>
        <begin position="1054"/>
        <end position="1199"/>
    </location>
</feature>
<feature type="domain" description="RNase III 2" evidence="4">
    <location>
        <begin position="1250"/>
        <end position="1402"/>
    </location>
</feature>
<feature type="domain" description="DRBM">
    <location>
        <begin position="1436"/>
        <end position="1504"/>
    </location>
</feature>
<feature type="region of interest" description="Disordered" evidence="8">
    <location>
        <begin position="36"/>
        <end position="70"/>
    </location>
</feature>
<feature type="short sequence motif" description="DEAH box">
    <location>
        <begin position="256"/>
        <end position="259"/>
    </location>
</feature>
<feature type="compositionally biased region" description="Acidic residues" evidence="8">
    <location>
        <begin position="51"/>
        <end position="60"/>
    </location>
</feature>
<feature type="binding site" evidence="5">
    <location>
        <begin position="143"/>
        <end position="150"/>
    </location>
    <ligand>
        <name>ATP</name>
        <dbReference type="ChEBI" id="CHEBI:30616"/>
    </ligand>
</feature>
<feature type="binding site" evidence="1">
    <location>
        <position position="1291"/>
    </location>
    <ligand>
        <name>Mg(2+)</name>
        <dbReference type="ChEBI" id="CHEBI:18420"/>
    </ligand>
</feature>
<feature type="binding site" evidence="1">
    <location>
        <position position="1388"/>
    </location>
    <ligand>
        <name>Mg(2+)</name>
        <dbReference type="ChEBI" id="CHEBI:18420"/>
    </ligand>
</feature>
<feature type="binding site" evidence="1">
    <location>
        <position position="1391"/>
    </location>
    <ligand>
        <name>Mg(2+)</name>
        <dbReference type="ChEBI" id="CHEBI:18420"/>
    </ligand>
</feature>
<feature type="binding site" evidence="2">
    <location>
        <position position="1448"/>
    </location>
    <ligand>
        <name>Zn(2+)</name>
        <dbReference type="ChEBI" id="CHEBI:29105"/>
    </ligand>
</feature>
<feature type="binding site" evidence="2">
    <location>
        <position position="1475"/>
    </location>
    <ligand>
        <name>Zn(2+)</name>
        <dbReference type="ChEBI" id="CHEBI:29105"/>
    </ligand>
</feature>
<feature type="binding site" evidence="2">
    <location>
        <position position="1516"/>
    </location>
    <ligand>
        <name>Zn(2+)</name>
        <dbReference type="ChEBI" id="CHEBI:29105"/>
    </ligand>
</feature>
<feature type="binding site" evidence="2">
    <location>
        <position position="1518"/>
    </location>
    <ligand>
        <name>Zn(2+)</name>
        <dbReference type="ChEBI" id="CHEBI:29105"/>
    </ligand>
</feature>
<feature type="site" description="Important for activity" evidence="1">
    <location>
        <position position="1384"/>
    </location>
</feature>
<reference key="1">
    <citation type="journal article" date="2008" name="PLoS Genet.">
        <title>Genomic islands in the pathogenic filamentous fungus Aspergillus fumigatus.</title>
        <authorList>
            <person name="Fedorova N.D."/>
            <person name="Khaldi N."/>
            <person name="Joardar V.S."/>
            <person name="Maiti R."/>
            <person name="Amedeo P."/>
            <person name="Anderson M.J."/>
            <person name="Crabtree J."/>
            <person name="Silva J.C."/>
            <person name="Badger J.H."/>
            <person name="Albarraq A."/>
            <person name="Angiuoli S."/>
            <person name="Bussey H."/>
            <person name="Bowyer P."/>
            <person name="Cotty P.J."/>
            <person name="Dyer P.S."/>
            <person name="Egan A."/>
            <person name="Galens K."/>
            <person name="Fraser-Liggett C.M."/>
            <person name="Haas B.J."/>
            <person name="Inman J.M."/>
            <person name="Kent R."/>
            <person name="Lemieux S."/>
            <person name="Malavazi I."/>
            <person name="Orvis J."/>
            <person name="Roemer T."/>
            <person name="Ronning C.M."/>
            <person name="Sundaram J.P."/>
            <person name="Sutton G."/>
            <person name="Turner G."/>
            <person name="Venter J.C."/>
            <person name="White O.R."/>
            <person name="Whitty B.R."/>
            <person name="Youngman P."/>
            <person name="Wolfe K.H."/>
            <person name="Goldman G.H."/>
            <person name="Wortman J.R."/>
            <person name="Jiang B."/>
            <person name="Denning D.W."/>
            <person name="Nierman W.C."/>
        </authorList>
    </citation>
    <scope>NUCLEOTIDE SEQUENCE [LARGE SCALE GENOMIC DNA]</scope>
    <source>
        <strain>ATCC 1007 / CBS 513.65 / DSM 816 / NCTC 3887 / NRRL 1 / QM 1276 / 107</strain>
    </source>
</reference>
<sequence length="1534" mass="174094">MSSDLISQAESISNIEILRALFITDTHTTVGDVAVPSAEPGVEHDQISPGESDEEIEENISDQNNSSSQKRLQNAQFEALLTRRAEDTSNENIDRVPLNLSDNELSIAHLVAKQDVGGGLLDPREYQIELFERAKAQNTIAVLDTGSGKTLIAVLLLRHVLQNELNDRANGKPHRVSFFLVDSVTLAYQQAAVLRNNIDQNVAHFFGAMGTDLWDRQVWEEHLQQNMVIVCTAEILNQCLLNSHVRMNQINLLIFDEAHHTKKDHPYARIIRDSYFKASPPQRPRIFGMTASPIDTKGDIIAAATRLETLLDSRIATTSKITLLRQVVSRPIEKVWAYDRLESPFKTNLHKLMENRFGNVKALEGVFRFAWYASSELGRWCSDRAWLYALADDVLPKLEGHVNKLAESTAAATERDMAFKEITLIKEASNIVKAHTFNDPEFPGELSPKVRLLQTELSKHFSHAPETKCIIFTQKRYTAKTLHELFTILSIPHLRPGVLIGVRSGDIGGMNITFRQQFLALVKFRKGEINCLFATSVAEEGLDIPDCNLVVRFDLYHTLIQYVQSRGRARHYHSTYASMVEKDNSDHEARLREVREAEKTMQNFCETLPEDRILHGNDHDLDSLLQHEEGRRTFTVKSTGARLTYHSAIAILARYASSLQYEKETTPQATYVVQSVGNTYVCEVILPEKSPIRGLTGSPAIRKSIAKQSAAFDTCLLLRRHKLLDDFFKSIYHKRLPAMRNAKLAITSKKTNQYDMLLKPSIWRRHQGILPSKLYGTILSLLPSEPLSREHQPILVLTREKLPDFPAFPIYLDEDIETKVVPRSLDTGMELSAEELRALTTFTLRIFRDVFHKVYEQESEKLPYWLAPAEPLDANGREPGPRGIIDWKTVTFVQENDEIVFSRDLAPESLVNRFMFDKWDGRSRFFTIKVMEGLRAADPPPSSVPRRRHMDNIMSYCLSLSKNSRARFLAGCHWDQPVLQAELVRLRRNLLDKLTTEEKKIQTECFICAEPLKISAIPPSIASTCLAFPAIITRLDSYLISIEACDELDLVIRSDYALEAVTKDSDNTEEHRGQQIHFQRGMGKNYERLEFLGDCFLKMATSIALFTQNPDDDEFDYHVNRMCLICNKNLFNTAKKRQIYRYIRSRSFSRHVWYPDGLTLLQGKDHSKKMLSQAKHALGEKTIADVCEALIGACLLSGGPEHRFDMGVKAVSVFVDSPSHAVSRWKEYIGLYKPPNYQVRKAEGAETNLALQVEEKLGYHFRYPRLLCSAVTHPSTPSTWYFRVPCYQRLEFLGDSLLDMVCVEDLFHRFPDRDPQWLTEHKMAMVSNKFLGALAVKLGFHKHIKAFSNPLQAQITYYVEEIETAEAESEGAVDYWVVAKDPPKCLPDMVEAYLGAIFVDSDFSFEVIEAFFQAQIKPYFQDMSIYDTFANKHPTTFLHNRLANEFGCTNYCLKAGEMPAIDGMPAGVLAAVIVHNSVVSEATASSSRYAKIRASERALVVLDGLLPYEFRQRYNCNCQVVGNPASAPDIGTAI</sequence>
<dbReference type="EC" id="3.1.26.-"/>
<dbReference type="EC" id="3.6.4.-"/>
<dbReference type="EMBL" id="DS027049">
    <property type="protein sequence ID" value="EAW13047.1"/>
    <property type="status" value="ALT_SEQ"/>
    <property type="molecule type" value="Genomic_DNA"/>
</dbReference>
<dbReference type="RefSeq" id="XP_001274473.1">
    <property type="nucleotide sequence ID" value="XM_001274472.1"/>
</dbReference>
<dbReference type="SMR" id="A1CBC9"/>
<dbReference type="STRING" id="344612.A1CBC9"/>
<dbReference type="GeneID" id="4706314"/>
<dbReference type="KEGG" id="act:ACLA_014840"/>
<dbReference type="eggNOG" id="KOG0701">
    <property type="taxonomic scope" value="Eukaryota"/>
</dbReference>
<dbReference type="OrthoDB" id="416741at2759"/>
<dbReference type="Proteomes" id="UP000006701">
    <property type="component" value="Unassembled WGS sequence"/>
</dbReference>
<dbReference type="GO" id="GO:0005737">
    <property type="term" value="C:cytoplasm"/>
    <property type="evidence" value="ECO:0007669"/>
    <property type="project" value="TreeGrafter"/>
</dbReference>
<dbReference type="GO" id="GO:0005634">
    <property type="term" value="C:nucleus"/>
    <property type="evidence" value="ECO:0007669"/>
    <property type="project" value="TreeGrafter"/>
</dbReference>
<dbReference type="GO" id="GO:0005524">
    <property type="term" value="F:ATP binding"/>
    <property type="evidence" value="ECO:0007669"/>
    <property type="project" value="UniProtKB-KW"/>
</dbReference>
<dbReference type="GO" id="GO:0003677">
    <property type="term" value="F:DNA binding"/>
    <property type="evidence" value="ECO:0007669"/>
    <property type="project" value="InterPro"/>
</dbReference>
<dbReference type="GO" id="GO:0004386">
    <property type="term" value="F:helicase activity"/>
    <property type="evidence" value="ECO:0007669"/>
    <property type="project" value="UniProtKB-KW"/>
</dbReference>
<dbReference type="GO" id="GO:0046872">
    <property type="term" value="F:metal ion binding"/>
    <property type="evidence" value="ECO:0007669"/>
    <property type="project" value="UniProtKB-KW"/>
</dbReference>
<dbReference type="GO" id="GO:0004525">
    <property type="term" value="F:ribonuclease III activity"/>
    <property type="evidence" value="ECO:0007669"/>
    <property type="project" value="InterPro"/>
</dbReference>
<dbReference type="GO" id="GO:0003723">
    <property type="term" value="F:RNA binding"/>
    <property type="evidence" value="ECO:0007669"/>
    <property type="project" value="UniProtKB-KW"/>
</dbReference>
<dbReference type="GO" id="GO:0051607">
    <property type="term" value="P:defense response to virus"/>
    <property type="evidence" value="ECO:0007669"/>
    <property type="project" value="UniProtKB-KW"/>
</dbReference>
<dbReference type="GO" id="GO:0050688">
    <property type="term" value="P:regulation of defense response to virus"/>
    <property type="evidence" value="ECO:0007669"/>
    <property type="project" value="UniProtKB-KW"/>
</dbReference>
<dbReference type="GO" id="GO:0030422">
    <property type="term" value="P:siRNA processing"/>
    <property type="evidence" value="ECO:0007669"/>
    <property type="project" value="TreeGrafter"/>
</dbReference>
<dbReference type="CDD" id="cd18034">
    <property type="entry name" value="DEXHc_dicer"/>
    <property type="match status" value="1"/>
</dbReference>
<dbReference type="CDD" id="cd00593">
    <property type="entry name" value="RIBOc"/>
    <property type="match status" value="2"/>
</dbReference>
<dbReference type="FunFam" id="1.10.1520.10:FF:000015">
    <property type="entry name" value="Dicer-like protein 1"/>
    <property type="match status" value="1"/>
</dbReference>
<dbReference type="FunFam" id="1.10.1520.10:FF:000026">
    <property type="entry name" value="Dicer-like protein 1"/>
    <property type="match status" value="1"/>
</dbReference>
<dbReference type="FunFam" id="3.30.160.380:FF:000004">
    <property type="entry name" value="Dicer-like protein 1"/>
    <property type="match status" value="1"/>
</dbReference>
<dbReference type="FunFam" id="3.40.50.300:FF:001669">
    <property type="entry name" value="Dicer-like protein 1"/>
    <property type="match status" value="1"/>
</dbReference>
<dbReference type="FunFam" id="3.40.50.300:FF:001988">
    <property type="entry name" value="Dicer-like protein 1"/>
    <property type="match status" value="1"/>
</dbReference>
<dbReference type="Gene3D" id="3.30.160.380">
    <property type="entry name" value="Dicer dimerisation domain"/>
    <property type="match status" value="1"/>
</dbReference>
<dbReference type="Gene3D" id="3.40.50.300">
    <property type="entry name" value="P-loop containing nucleotide triphosphate hydrolases"/>
    <property type="match status" value="2"/>
</dbReference>
<dbReference type="Gene3D" id="1.10.1520.10">
    <property type="entry name" value="Ribonuclease III domain"/>
    <property type="match status" value="2"/>
</dbReference>
<dbReference type="InterPro" id="IPR038248">
    <property type="entry name" value="Dicer_dimer_sf"/>
</dbReference>
<dbReference type="InterPro" id="IPR005034">
    <property type="entry name" value="Dicer_dimerisation_dom"/>
</dbReference>
<dbReference type="InterPro" id="IPR056755">
    <property type="entry name" value="DSRM_2"/>
</dbReference>
<dbReference type="InterPro" id="IPR006935">
    <property type="entry name" value="Helicase/UvrB_N"/>
</dbReference>
<dbReference type="InterPro" id="IPR014001">
    <property type="entry name" value="Helicase_ATP-bd"/>
</dbReference>
<dbReference type="InterPro" id="IPR001650">
    <property type="entry name" value="Helicase_C-like"/>
</dbReference>
<dbReference type="InterPro" id="IPR027417">
    <property type="entry name" value="P-loop_NTPase"/>
</dbReference>
<dbReference type="InterPro" id="IPR003100">
    <property type="entry name" value="PAZ_dom"/>
</dbReference>
<dbReference type="InterPro" id="IPR000999">
    <property type="entry name" value="RNase_III_dom"/>
</dbReference>
<dbReference type="InterPro" id="IPR036389">
    <property type="entry name" value="RNase_III_sf"/>
</dbReference>
<dbReference type="PANTHER" id="PTHR14950:SF62">
    <property type="entry name" value="DICER-LIKE PROTEIN 1"/>
    <property type="match status" value="1"/>
</dbReference>
<dbReference type="PANTHER" id="PTHR14950">
    <property type="entry name" value="DICER-RELATED"/>
    <property type="match status" value="1"/>
</dbReference>
<dbReference type="Pfam" id="PF03368">
    <property type="entry name" value="Dicer_dimer"/>
    <property type="match status" value="1"/>
</dbReference>
<dbReference type="Pfam" id="PF24995">
    <property type="entry name" value="DSRM_2"/>
    <property type="match status" value="1"/>
</dbReference>
<dbReference type="Pfam" id="PF00271">
    <property type="entry name" value="Helicase_C"/>
    <property type="match status" value="1"/>
</dbReference>
<dbReference type="Pfam" id="PF04851">
    <property type="entry name" value="ResIII"/>
    <property type="match status" value="1"/>
</dbReference>
<dbReference type="Pfam" id="PF00636">
    <property type="entry name" value="Ribonuclease_3"/>
    <property type="match status" value="2"/>
</dbReference>
<dbReference type="SMART" id="SM00487">
    <property type="entry name" value="DEXDc"/>
    <property type="match status" value="1"/>
</dbReference>
<dbReference type="SMART" id="SM00490">
    <property type="entry name" value="HELICc"/>
    <property type="match status" value="1"/>
</dbReference>
<dbReference type="SMART" id="SM00535">
    <property type="entry name" value="RIBOc"/>
    <property type="match status" value="2"/>
</dbReference>
<dbReference type="SUPFAM" id="SSF52540">
    <property type="entry name" value="P-loop containing nucleoside triphosphate hydrolases"/>
    <property type="match status" value="1"/>
</dbReference>
<dbReference type="SUPFAM" id="SSF69065">
    <property type="entry name" value="RNase III domain-like"/>
    <property type="match status" value="2"/>
</dbReference>
<dbReference type="PROSITE" id="PS51327">
    <property type="entry name" value="DICER_DSRBF"/>
    <property type="match status" value="1"/>
</dbReference>
<dbReference type="PROSITE" id="PS51192">
    <property type="entry name" value="HELICASE_ATP_BIND_1"/>
    <property type="match status" value="1"/>
</dbReference>
<dbReference type="PROSITE" id="PS51194">
    <property type="entry name" value="HELICASE_CTER"/>
    <property type="match status" value="1"/>
</dbReference>
<dbReference type="PROSITE" id="PS50821">
    <property type="entry name" value="PAZ"/>
    <property type="match status" value="1"/>
</dbReference>
<dbReference type="PROSITE" id="PS00517">
    <property type="entry name" value="RNASE_3_1"/>
    <property type="match status" value="1"/>
</dbReference>
<dbReference type="PROSITE" id="PS50142">
    <property type="entry name" value="RNASE_3_2"/>
    <property type="match status" value="2"/>
</dbReference>
<comment type="function">
    <text evidence="1">Dicer-like endonuclease involved in cleaving double-stranded RNA in the RNA interference (RNAi) pathway. Produces 21 to 25 bp dsRNAs (siRNAs) which target the selective destruction of homologous RNAs leading to sequence-specific suppression of gene expression, called post-transcriptional gene silencing (PTGS). Part of a broad host defense response against viral infection and transposons (By similarity).</text>
</comment>
<comment type="cofactor">
    <cofactor evidence="1">
        <name>Mg(2+)</name>
        <dbReference type="ChEBI" id="CHEBI:18420"/>
    </cofactor>
    <cofactor evidence="1">
        <name>Mn(2+)</name>
        <dbReference type="ChEBI" id="CHEBI:29035"/>
    </cofactor>
</comment>
<comment type="similarity">
    <text evidence="7">Belongs to the helicase family. Dicer subfamily.</text>
</comment>
<comment type="sequence caution" evidence="9">
    <conflict type="erroneous gene model prediction">
        <sequence resource="EMBL-CDS" id="EAW13047"/>
    </conflict>
</comment>